<comment type="function">
    <text evidence="1">NDH shuttles electrons from NAD(P)H:plastoquinone, via FMN and iron-sulfur (Fe-S) centers, to quinones in the photosynthetic chain and possibly in a chloroplast respiratory chain. The immediate electron acceptor for the enzyme in this species is believed to be plastoquinone. Couples the redox reaction to proton translocation, and thus conserves the redox energy in a proton gradient.</text>
</comment>
<comment type="catalytic activity">
    <reaction evidence="1">
        <text>a plastoquinone + NADH + (n+1) H(+)(in) = a plastoquinol + NAD(+) + n H(+)(out)</text>
        <dbReference type="Rhea" id="RHEA:42608"/>
        <dbReference type="Rhea" id="RHEA-COMP:9561"/>
        <dbReference type="Rhea" id="RHEA-COMP:9562"/>
        <dbReference type="ChEBI" id="CHEBI:15378"/>
        <dbReference type="ChEBI" id="CHEBI:17757"/>
        <dbReference type="ChEBI" id="CHEBI:57540"/>
        <dbReference type="ChEBI" id="CHEBI:57945"/>
        <dbReference type="ChEBI" id="CHEBI:62192"/>
    </reaction>
</comment>
<comment type="catalytic activity">
    <reaction evidence="1">
        <text>a plastoquinone + NADPH + (n+1) H(+)(in) = a plastoquinol + NADP(+) + n H(+)(out)</text>
        <dbReference type="Rhea" id="RHEA:42612"/>
        <dbReference type="Rhea" id="RHEA-COMP:9561"/>
        <dbReference type="Rhea" id="RHEA-COMP:9562"/>
        <dbReference type="ChEBI" id="CHEBI:15378"/>
        <dbReference type="ChEBI" id="CHEBI:17757"/>
        <dbReference type="ChEBI" id="CHEBI:57783"/>
        <dbReference type="ChEBI" id="CHEBI:58349"/>
        <dbReference type="ChEBI" id="CHEBI:62192"/>
    </reaction>
</comment>
<comment type="subunit">
    <text evidence="1">NDH is composed of at least 16 different subunits, 5 of which are encoded in the nucleus.</text>
</comment>
<comment type="subcellular location">
    <subcellularLocation>
        <location evidence="1">Plastid</location>
        <location evidence="1">Chloroplast thylakoid membrane</location>
        <topology evidence="1">Peripheral membrane protein</topology>
        <orientation evidence="1">Stromal side</orientation>
    </subcellularLocation>
</comment>
<comment type="similarity">
    <text evidence="1">Belongs to the complex I 49 kDa subunit family.</text>
</comment>
<evidence type="ECO:0000255" key="1">
    <source>
        <dbReference type="HAMAP-Rule" id="MF_01358"/>
    </source>
</evidence>
<protein>
    <recommendedName>
        <fullName evidence="1">NAD(P)H-quinone oxidoreductase subunit H, chloroplastic</fullName>
        <ecNumber evidence="1">7.1.1.-</ecNumber>
    </recommendedName>
    <alternativeName>
        <fullName>NAD(P)H dehydrogenase subunit H</fullName>
    </alternativeName>
    <alternativeName>
        <fullName evidence="1">NADH-plastoquinone oxidoreductase 49 kDa subunit</fullName>
    </alternativeName>
    <alternativeName>
        <fullName evidence="1">NADH-plastoquinone oxidoreductase subunit H</fullName>
    </alternativeName>
</protein>
<organism>
    <name type="scientific">Oenothera elata subsp. hookeri</name>
    <name type="common">Hooker's evening primrose</name>
    <name type="synonym">Oenothera hookeri</name>
    <dbReference type="NCBI Taxonomy" id="85636"/>
    <lineage>
        <taxon>Eukaryota</taxon>
        <taxon>Viridiplantae</taxon>
        <taxon>Streptophyta</taxon>
        <taxon>Embryophyta</taxon>
        <taxon>Tracheophyta</taxon>
        <taxon>Spermatophyta</taxon>
        <taxon>Magnoliopsida</taxon>
        <taxon>eudicotyledons</taxon>
        <taxon>Gunneridae</taxon>
        <taxon>Pentapetalae</taxon>
        <taxon>rosids</taxon>
        <taxon>malvids</taxon>
        <taxon>Myrtales</taxon>
        <taxon>Onagraceae</taxon>
        <taxon>Onagroideae</taxon>
        <taxon>Onagreae</taxon>
        <taxon>Oenothera</taxon>
    </lineage>
</organism>
<proteinExistence type="inferred from homology"/>
<dbReference type="EC" id="7.1.1.-" evidence="1"/>
<dbReference type="EMBL" id="AJ271079">
    <property type="protein sequence ID" value="CAB67226.1"/>
    <property type="molecule type" value="Genomic_DNA"/>
</dbReference>
<dbReference type="RefSeq" id="NP_084757.1">
    <property type="nucleotide sequence ID" value="NC_002693.2"/>
</dbReference>
<dbReference type="SMR" id="Q9MTH6"/>
<dbReference type="GeneID" id="802702"/>
<dbReference type="GO" id="GO:0009535">
    <property type="term" value="C:chloroplast thylakoid membrane"/>
    <property type="evidence" value="ECO:0007669"/>
    <property type="project" value="UniProtKB-SubCell"/>
</dbReference>
<dbReference type="GO" id="GO:0051287">
    <property type="term" value="F:NAD binding"/>
    <property type="evidence" value="ECO:0007669"/>
    <property type="project" value="InterPro"/>
</dbReference>
<dbReference type="GO" id="GO:0016655">
    <property type="term" value="F:oxidoreductase activity, acting on NAD(P)H, quinone or similar compound as acceptor"/>
    <property type="evidence" value="ECO:0007669"/>
    <property type="project" value="UniProtKB-UniRule"/>
</dbReference>
<dbReference type="GO" id="GO:0048038">
    <property type="term" value="F:quinone binding"/>
    <property type="evidence" value="ECO:0007669"/>
    <property type="project" value="UniProtKB-KW"/>
</dbReference>
<dbReference type="GO" id="GO:0019684">
    <property type="term" value="P:photosynthesis, light reaction"/>
    <property type="evidence" value="ECO:0007669"/>
    <property type="project" value="UniProtKB-UniRule"/>
</dbReference>
<dbReference type="FunFam" id="1.10.645.10:FF:000003">
    <property type="entry name" value="NAD(P)H-quinone oxidoreductase subunit H, chloroplastic"/>
    <property type="match status" value="1"/>
</dbReference>
<dbReference type="Gene3D" id="1.10.645.10">
    <property type="entry name" value="Cytochrome-c3 Hydrogenase, chain B"/>
    <property type="match status" value="1"/>
</dbReference>
<dbReference type="HAMAP" id="MF_01358">
    <property type="entry name" value="NDH1_NuoD"/>
    <property type="match status" value="1"/>
</dbReference>
<dbReference type="InterPro" id="IPR001135">
    <property type="entry name" value="NADH_Q_OxRdtase_suD"/>
</dbReference>
<dbReference type="InterPro" id="IPR014029">
    <property type="entry name" value="NADH_UbQ_OxRdtase_49kDa_CS"/>
</dbReference>
<dbReference type="InterPro" id="IPR022885">
    <property type="entry name" value="NDH1_su_D/H"/>
</dbReference>
<dbReference type="InterPro" id="IPR029014">
    <property type="entry name" value="NiFe-Hase_large"/>
</dbReference>
<dbReference type="NCBIfam" id="NF004739">
    <property type="entry name" value="PRK06075.1"/>
    <property type="match status" value="1"/>
</dbReference>
<dbReference type="NCBIfam" id="NF005649">
    <property type="entry name" value="PRK07415.1"/>
    <property type="match status" value="1"/>
</dbReference>
<dbReference type="PANTHER" id="PTHR11993:SF10">
    <property type="entry name" value="NADH DEHYDROGENASE [UBIQUINONE] IRON-SULFUR PROTEIN 2, MITOCHONDRIAL"/>
    <property type="match status" value="1"/>
</dbReference>
<dbReference type="PANTHER" id="PTHR11993">
    <property type="entry name" value="NADH-UBIQUINONE OXIDOREDUCTASE 49 KDA SUBUNIT"/>
    <property type="match status" value="1"/>
</dbReference>
<dbReference type="Pfam" id="PF00346">
    <property type="entry name" value="Complex1_49kDa"/>
    <property type="match status" value="1"/>
</dbReference>
<dbReference type="SUPFAM" id="SSF56762">
    <property type="entry name" value="HydB/Nqo4-like"/>
    <property type="match status" value="1"/>
</dbReference>
<dbReference type="PROSITE" id="PS00535">
    <property type="entry name" value="COMPLEX1_49K"/>
    <property type="match status" value="1"/>
</dbReference>
<name>NDHH_OENEH</name>
<reference key="1">
    <citation type="journal article" date="2000" name="Mol. Gen. Genet.">
        <title>Complete nucleotide sequence of the Oenothera elata plastid chromosome, representing plastome I of the five distinguishable Euoenothera plastomes.</title>
        <authorList>
            <person name="Hupfer H."/>
            <person name="Swiatek M."/>
            <person name="Hornung S."/>
            <person name="Herrmann R.G."/>
            <person name="Maier R.M."/>
            <person name="Chiu W.-L."/>
            <person name="Sears B."/>
        </authorList>
    </citation>
    <scope>NUCLEOTIDE SEQUENCE [LARGE SCALE GENOMIC DNA]</scope>
    <source>
        <strain>cv. Johansen</strain>
    </source>
</reference>
<sequence>MNVTTTRKDLMIVNMGPHHPSMHGVLRLILTLDGEDVIDCEPILGYLHRGMEKIAENRTVIQYLPYVTRWDYLATMFTEAITINGPEQLGNIQVPKRASYIRIIMLELSRIASHLLWLGPFMADIGAQTPFFYIFRERELVYDLFEAATGMRMMHNYFRIGGVAADLPYGWIDKCLDFCDYFLTAVSEYQKLITRNPIFLERVEGVGIIGGEEAINWGLSGPMLRASGIEWDLRKVDRYECYGELDWEIRWQKEGDSLARYLVRMSEMTESIKIIQQALEGIPGGPYENLEIRCFDREKDPEWDGFEYRFISKKPSPTFELPKQELYVRVEAPKGELGIFLIGDQSGFPWRWKIRPPGFINLQILPQLVKRMKLADIMTILGSIDIIMGEVDR</sequence>
<gene>
    <name evidence="1" type="primary">ndhH</name>
</gene>
<accession>Q9MTH6</accession>
<geneLocation type="chloroplast"/>
<feature type="chain" id="PRO_0000118606" description="NAD(P)H-quinone oxidoreductase subunit H, chloroplastic">
    <location>
        <begin position="1"/>
        <end position="393"/>
    </location>
</feature>
<keyword id="KW-0150">Chloroplast</keyword>
<keyword id="KW-0472">Membrane</keyword>
<keyword id="KW-0520">NAD</keyword>
<keyword id="KW-0521">NADP</keyword>
<keyword id="KW-0934">Plastid</keyword>
<keyword id="KW-0618">Plastoquinone</keyword>
<keyword id="KW-0874">Quinone</keyword>
<keyword id="KW-0793">Thylakoid</keyword>
<keyword id="KW-1278">Translocase</keyword>
<keyword id="KW-0813">Transport</keyword>